<organism>
    <name type="scientific">Sus scrofa</name>
    <name type="common">Pig</name>
    <dbReference type="NCBI Taxonomy" id="9823"/>
    <lineage>
        <taxon>Eukaryota</taxon>
        <taxon>Metazoa</taxon>
        <taxon>Chordata</taxon>
        <taxon>Craniata</taxon>
        <taxon>Vertebrata</taxon>
        <taxon>Euteleostomi</taxon>
        <taxon>Mammalia</taxon>
        <taxon>Eutheria</taxon>
        <taxon>Laurasiatheria</taxon>
        <taxon>Artiodactyla</taxon>
        <taxon>Suina</taxon>
        <taxon>Suidae</taxon>
        <taxon>Sus</taxon>
    </lineage>
</organism>
<keyword id="KW-1003">Cell membrane</keyword>
<keyword id="KW-1015">Disulfide bond</keyword>
<keyword id="KW-0297">G-protein coupled receptor</keyword>
<keyword id="KW-0325">Glycoprotein</keyword>
<keyword id="KW-0472">Membrane</keyword>
<keyword id="KW-0675">Receptor</keyword>
<keyword id="KW-1185">Reference proteome</keyword>
<keyword id="KW-0807">Transducer</keyword>
<keyword id="KW-0812">Transmembrane</keyword>
<keyword id="KW-1133">Transmembrane helix</keyword>
<sequence length="345" mass="39411">MERKLMSLLPSISLSEMEPNSTLGNHNSNRSCTTENFKREFYPIVYLVIFIWGALGNGFSIYVFLKPYKKSTSVNVFMLNLAISDLLFTITLPFRVDYYLRGSNXIFGDTPCRIMSYSMYVNMYSSIYFLTVLSVVRFLATVHPFRLLHTTSIKNAWILCGVIWIFIMASSTVLLKNGSEQKDNVTLCLELNSNKVTKLKTMNYVALVVGFVLPFGTLSICYLLIIRALLKVEVPESGLRLSHRKALITVIIALIIFLLCFLPYHVLRTLHLLEWKADKCKDRLHKAVAVTLALAAANSCFNPFLYYFAGENFKDRLKSALRKGRPQKTRCGFSVCVWLKKETRV</sequence>
<feature type="chain" id="PRO_0000069305" description="Cysteinyl leukotriene receptor 2">
    <location>
        <begin position="1"/>
        <end position="345"/>
    </location>
</feature>
<feature type="topological domain" description="Extracellular" evidence="2">
    <location>
        <begin position="1"/>
        <end position="43"/>
    </location>
</feature>
<feature type="transmembrane region" description="Helical; Name=1" evidence="2">
    <location>
        <begin position="44"/>
        <end position="64"/>
    </location>
</feature>
<feature type="topological domain" description="Cytoplasmic" evidence="2">
    <location>
        <begin position="65"/>
        <end position="73"/>
    </location>
</feature>
<feature type="transmembrane region" description="Helical; Name=2" evidence="2">
    <location>
        <begin position="74"/>
        <end position="94"/>
    </location>
</feature>
<feature type="topological domain" description="Extracellular" evidence="2">
    <location>
        <begin position="95"/>
        <end position="124"/>
    </location>
</feature>
<feature type="transmembrane region" description="Helical; Name=3" evidence="2">
    <location>
        <begin position="125"/>
        <end position="145"/>
    </location>
</feature>
<feature type="topological domain" description="Cytoplasmic" evidence="2">
    <location>
        <begin position="146"/>
        <end position="154"/>
    </location>
</feature>
<feature type="transmembrane region" description="Helical; Name=4" evidence="2">
    <location>
        <begin position="155"/>
        <end position="175"/>
    </location>
</feature>
<feature type="topological domain" description="Extracellular" evidence="2">
    <location>
        <begin position="176"/>
        <end position="205"/>
    </location>
</feature>
<feature type="transmembrane region" description="Helical; Name=5" evidence="2">
    <location>
        <begin position="206"/>
        <end position="226"/>
    </location>
</feature>
<feature type="topological domain" description="Cytoplasmic" evidence="2">
    <location>
        <begin position="227"/>
        <end position="246"/>
    </location>
</feature>
<feature type="transmembrane region" description="Helical; Name=6" evidence="2">
    <location>
        <begin position="247"/>
        <end position="267"/>
    </location>
</feature>
<feature type="topological domain" description="Extracellular" evidence="2">
    <location>
        <begin position="268"/>
        <end position="287"/>
    </location>
</feature>
<feature type="transmembrane region" description="Helical; Name=7" evidence="2">
    <location>
        <begin position="288"/>
        <end position="308"/>
    </location>
</feature>
<feature type="topological domain" description="Cytoplasmic" evidence="2">
    <location>
        <begin position="309"/>
        <end position="345"/>
    </location>
</feature>
<feature type="glycosylation site" description="N-linked (GlcNAc...) asparagine" evidence="2">
    <location>
        <position position="20"/>
    </location>
</feature>
<feature type="glycosylation site" description="N-linked (GlcNAc...) asparagine" evidence="2">
    <location>
        <position position="29"/>
    </location>
</feature>
<feature type="glycosylation site" description="N-linked (GlcNAc...) asparagine" evidence="2">
    <location>
        <position position="177"/>
    </location>
</feature>
<feature type="glycosylation site" description="N-linked (GlcNAc...) asparagine" evidence="2">
    <location>
        <position position="184"/>
    </location>
</feature>
<feature type="disulfide bond" evidence="3">
    <location>
        <begin position="112"/>
        <end position="188"/>
    </location>
</feature>
<accession>Q95N03</accession>
<comment type="function">
    <text evidence="1">Receptor for cysteinyl leukotrienes. The response is mediated via a G-protein that activates a phosphatidylinositol-calcium second messenger system (By similarity).</text>
</comment>
<comment type="subcellular location">
    <subcellularLocation>
        <location>Cell membrane</location>
        <topology>Multi-pass membrane protein</topology>
    </subcellularLocation>
</comment>
<comment type="similarity">
    <text evidence="3">Belongs to the G-protein coupled receptor 1 family.</text>
</comment>
<protein>
    <recommendedName>
        <fullName>Cysteinyl leukotriene receptor 2</fullName>
        <shortName>CysLTR2</shortName>
    </recommendedName>
</protein>
<proteinExistence type="evidence at transcript level"/>
<gene>
    <name type="primary">CYSLTR2</name>
    <name type="synonym">CYSLT2</name>
</gene>
<evidence type="ECO:0000250" key="1"/>
<evidence type="ECO:0000255" key="2"/>
<evidence type="ECO:0000255" key="3">
    <source>
        <dbReference type="PROSITE-ProRule" id="PRU00521"/>
    </source>
</evidence>
<reference key="1">
    <citation type="submission" date="2000-12" db="EMBL/GenBank/DDBJ databases">
        <title>Characterization of the cloned rat and porcine cysteinyl leukotriene receptors.</title>
        <authorList>
            <person name="Kamohara M."/>
            <person name="Takasaki J."/>
            <person name="Matsumoto M."/>
            <person name="Matsumoto S."/>
            <person name="Saito T."/>
            <person name="Ohishi T."/>
            <person name="Soga T."/>
            <person name="Matsushime H."/>
            <person name="Furuichi K."/>
        </authorList>
    </citation>
    <scope>NUCLEOTIDE SEQUENCE [MRNA]</scope>
</reference>
<name>CLTR2_PIG</name>
<dbReference type="EMBL" id="AB052662">
    <property type="protein sequence ID" value="BAB60817.1"/>
    <property type="molecule type" value="mRNA"/>
</dbReference>
<dbReference type="FunCoup" id="Q95N03">
    <property type="interactions" value="139"/>
</dbReference>
<dbReference type="STRING" id="9823.ENSSSCP00000010030"/>
<dbReference type="GlyCosmos" id="Q95N03">
    <property type="glycosylation" value="4 sites, No reported glycans"/>
</dbReference>
<dbReference type="GlyGen" id="Q95N03">
    <property type="glycosylation" value="4 sites"/>
</dbReference>
<dbReference type="PaxDb" id="9823-ENSSSCP00000010030"/>
<dbReference type="eggNOG" id="ENOG502RX8K">
    <property type="taxonomic scope" value="Eukaryota"/>
</dbReference>
<dbReference type="InParanoid" id="Q95N03"/>
<dbReference type="Proteomes" id="UP000008227">
    <property type="component" value="Unplaced"/>
</dbReference>
<dbReference type="Proteomes" id="UP000314985">
    <property type="component" value="Unplaced"/>
</dbReference>
<dbReference type="Proteomes" id="UP000694570">
    <property type="component" value="Unplaced"/>
</dbReference>
<dbReference type="Proteomes" id="UP000694571">
    <property type="component" value="Unplaced"/>
</dbReference>
<dbReference type="Proteomes" id="UP000694720">
    <property type="component" value="Unplaced"/>
</dbReference>
<dbReference type="Proteomes" id="UP000694722">
    <property type="component" value="Unplaced"/>
</dbReference>
<dbReference type="Proteomes" id="UP000694723">
    <property type="component" value="Unplaced"/>
</dbReference>
<dbReference type="Proteomes" id="UP000694724">
    <property type="component" value="Unplaced"/>
</dbReference>
<dbReference type="Proteomes" id="UP000694725">
    <property type="component" value="Unplaced"/>
</dbReference>
<dbReference type="Proteomes" id="UP000694726">
    <property type="component" value="Unplaced"/>
</dbReference>
<dbReference type="Proteomes" id="UP000694727">
    <property type="component" value="Unplaced"/>
</dbReference>
<dbReference type="Proteomes" id="UP000694728">
    <property type="component" value="Unplaced"/>
</dbReference>
<dbReference type="GO" id="GO:0005886">
    <property type="term" value="C:plasma membrane"/>
    <property type="evidence" value="ECO:0000318"/>
    <property type="project" value="GO_Central"/>
</dbReference>
<dbReference type="GO" id="GO:0001631">
    <property type="term" value="F:cysteinyl leukotriene receptor activity"/>
    <property type="evidence" value="ECO:0000318"/>
    <property type="project" value="GO_Central"/>
</dbReference>
<dbReference type="GO" id="GO:0008528">
    <property type="term" value="F:G protein-coupled peptide receptor activity"/>
    <property type="evidence" value="ECO:0000318"/>
    <property type="project" value="GO_Central"/>
</dbReference>
<dbReference type="GO" id="GO:0007218">
    <property type="term" value="P:neuropeptide signaling pathway"/>
    <property type="evidence" value="ECO:0000318"/>
    <property type="project" value="GO_Central"/>
</dbReference>
<dbReference type="CDD" id="cd15157">
    <property type="entry name" value="7tmA_CysLTR2"/>
    <property type="match status" value="1"/>
</dbReference>
<dbReference type="FunFam" id="1.20.1070.10:FF:000017">
    <property type="entry name" value="lysophosphatidic acid receptor 4"/>
    <property type="match status" value="1"/>
</dbReference>
<dbReference type="Gene3D" id="1.20.1070.10">
    <property type="entry name" value="Rhodopsin 7-helix transmembrane proteins"/>
    <property type="match status" value="1"/>
</dbReference>
<dbReference type="InterPro" id="IPR013311">
    <property type="entry name" value="CLT2_recept"/>
</dbReference>
<dbReference type="InterPro" id="IPR004071">
    <property type="entry name" value="Cyst_leuk_rcpt"/>
</dbReference>
<dbReference type="InterPro" id="IPR000276">
    <property type="entry name" value="GPCR_Rhodpsn"/>
</dbReference>
<dbReference type="InterPro" id="IPR017452">
    <property type="entry name" value="GPCR_Rhodpsn_7TM"/>
</dbReference>
<dbReference type="PANTHER" id="PTHR24231:SF48">
    <property type="entry name" value="G-PROTEIN COUPLED RECEPTORS FAMILY 1 PROFILE DOMAIN-CONTAINING PROTEIN"/>
    <property type="match status" value="1"/>
</dbReference>
<dbReference type="PANTHER" id="PTHR24231">
    <property type="entry name" value="PURINOCEPTOR-RELATED G-PROTEIN COUPLED RECEPTOR"/>
    <property type="match status" value="1"/>
</dbReference>
<dbReference type="Pfam" id="PF00001">
    <property type="entry name" value="7tm_1"/>
    <property type="match status" value="1"/>
</dbReference>
<dbReference type="PRINTS" id="PR01903">
    <property type="entry name" value="CYSLT2RECPTR"/>
</dbReference>
<dbReference type="PRINTS" id="PR01533">
    <property type="entry name" value="CYSLTRECPTR"/>
</dbReference>
<dbReference type="PRINTS" id="PR00237">
    <property type="entry name" value="GPCRRHODOPSN"/>
</dbReference>
<dbReference type="SUPFAM" id="SSF81321">
    <property type="entry name" value="Family A G protein-coupled receptor-like"/>
    <property type="match status" value="1"/>
</dbReference>
<dbReference type="PROSITE" id="PS50262">
    <property type="entry name" value="G_PROTEIN_RECEP_F1_2"/>
    <property type="match status" value="1"/>
</dbReference>